<sequence length="1235" mass="136458">MNMLHLSDRNASLAPSGGEHSLPTGGAVCRDAMDILPVILRAPVALLLLLVVLPQLSVGAEANVTVKVLSATWNWYMPRKYVTAINAGFNASLKSRNWTVAGSVNVQVVYPSNLDLMPEDFIKKQLELETDQNKIVIVYGPLGDKSVMHSIPHLMNHRVVAFGLITGSTFIRQWNPYLYFLRADPAAETLVLIRYSLCQLRVLRLGFMYLQGVHYGDEEYALTVNVMSRMGYELHGVFTVMSPDGKPAPDAEFKEVFERFATALPQAIIVFGAPVDDTAKFLMMMAVDERIARSYILSPSSVQLSLIEMWQLALEAAGASFAPGQLLFTGTNPLAKDSQYTAIKRFQEVMSEYLKAHVGETNITEADYFLTHDLEGELMVYGWISGEVLSQALSNLEWLKDRATFVRSLYDQRRYVINDIVIGDYGGTCEGDAAKHGATCECNQGSKAVYVKEMLENGQKTSVRSGFTVLKASLCYTDSSELHGPLDGLVVFMKDDDIASKAAALWQKGTSHLVGKGDLGYSDRFFLHAFNTTIAEAANDLRRDQGERIVTAVFGPVTEAMLDTPNITFIDPLELKPRLNKFRRNVIHLSPTLEQQLYVLSSYLAGAGVGNVDAVICSNEADGIADFLRSSLTEFAVSLRSAVIREDGEDVGKYLPMSGTVFVIGLSVPDVKEIARKLEERNDLRVIVLFGEFSFLYDLFATALNNTAGAARLVFATSLPHWGDTETSSKTAQLFHDVEKDSRLWTPLSVLAFATGRLMRVILLHVEEMSPETLVNFFYTDSSIVSDDMRYGVFDDTKCVDTANKLSKNGCASNYGATQISVWSMARALNASIPPLTNPMTPSMTFRNSNAGRISGASLVGIIIGGALALFLVVALGVVPYFFLRNTVITICTKDDRPVTLIFTDIESSTALWAAHPEVMPDAVATHHRLIRTLISKYECYEVKTVGDSFMIASKSPFAAVQLAQELQLCFLHHDWGTNAIDESYQQFEQQRAEDDSDYTPPTARLDPKVYSRLWNGLRVRVGIHTGLCDIRRDEVTKGYDYYGRTSNMAARTESVANGGQVLMTHAAYMSLSAEERQQIDVTALGDVPLRGVPKPVEMYRLNAVPGRTFSVLRLELELLNDDEDQTTTSCSDHSSSRTDLSVAAQTIAASLQSLLGTFTPAQRQKALIPFCERWRVPLPQKVGNVWDDDGCQEVVRRVAAKVGRVMDFGTRKPSSSVTSWKGVEVSSQVEERLL</sequence>
<proteinExistence type="inferred from homology"/>
<protein>
    <recommendedName>
        <fullName>Receptor-type adenylate cyclase ESAG 4</fullName>
        <ecNumber>4.6.1.1</ecNumber>
    </recommendedName>
    <alternativeName>
        <fullName>ATP pyrophosphate-lyase</fullName>
    </alternativeName>
    <alternativeName>
        <fullName>Adenylyl cyclase</fullName>
    </alternativeName>
    <alternativeName>
        <fullName>Antigen 4</fullName>
    </alternativeName>
    <alternativeName>
        <fullName>Expression site-associated protein 4</fullName>
    </alternativeName>
</protein>
<accession>Q26721</accession>
<reference key="1">
    <citation type="journal article" date="1989" name="Cell">
        <title>The genes and transcripts of an antigen gene expression site from T. brucei.</title>
        <authorList>
            <person name="Pays E."/>
            <person name="Tebabi P."/>
            <person name="Pays A."/>
            <person name="Coquelet H."/>
            <person name="Revelard P."/>
            <person name="Salmon D."/>
            <person name="Steinert M."/>
        </authorList>
    </citation>
    <scope>NUCLEOTIDE SEQUENCE [GENOMIC DNA]</scope>
    <source>
        <strain>EATRO 1125</strain>
    </source>
</reference>
<dbReference type="EC" id="4.6.1.1"/>
<dbReference type="EMBL" id="M33720">
    <property type="protein sequence ID" value="AAA30158.1"/>
    <property type="molecule type" value="Genomic_DNA"/>
</dbReference>
<dbReference type="PIR" id="D32433">
    <property type="entry name" value="D32433"/>
</dbReference>
<dbReference type="SMR" id="Q26721"/>
<dbReference type="GlyCosmos" id="Q26721">
    <property type="glycosylation" value="8 sites, No reported glycans"/>
</dbReference>
<dbReference type="GO" id="GO:0016020">
    <property type="term" value="C:membrane"/>
    <property type="evidence" value="ECO:0007669"/>
    <property type="project" value="UniProtKB-SubCell"/>
</dbReference>
<dbReference type="GO" id="GO:0004016">
    <property type="term" value="F:adenylate cyclase activity"/>
    <property type="evidence" value="ECO:0007669"/>
    <property type="project" value="UniProtKB-EC"/>
</dbReference>
<dbReference type="GO" id="GO:0005524">
    <property type="term" value="F:ATP binding"/>
    <property type="evidence" value="ECO:0007669"/>
    <property type="project" value="UniProtKB-KW"/>
</dbReference>
<dbReference type="GO" id="GO:0046872">
    <property type="term" value="F:metal ion binding"/>
    <property type="evidence" value="ECO:0007669"/>
    <property type="project" value="UniProtKB-KW"/>
</dbReference>
<dbReference type="GO" id="GO:0006171">
    <property type="term" value="P:cAMP biosynthetic process"/>
    <property type="evidence" value="ECO:0007669"/>
    <property type="project" value="UniProtKB-KW"/>
</dbReference>
<dbReference type="GO" id="GO:0035556">
    <property type="term" value="P:intracellular signal transduction"/>
    <property type="evidence" value="ECO:0007669"/>
    <property type="project" value="InterPro"/>
</dbReference>
<dbReference type="CDD" id="cd07556">
    <property type="entry name" value="Nucleotidyl_cyc_III"/>
    <property type="match status" value="1"/>
</dbReference>
<dbReference type="FunFam" id="3.30.70.1230:FF:000022">
    <property type="entry name" value="Receptor-type adenylate cyclase GRESAG 4, putative"/>
    <property type="match status" value="1"/>
</dbReference>
<dbReference type="FunFam" id="3.40.50.2300:FF:000162">
    <property type="entry name" value="Receptor-type adenylate cyclase GRESAG 4, putative"/>
    <property type="match status" value="1"/>
</dbReference>
<dbReference type="Gene3D" id="3.30.70.1230">
    <property type="entry name" value="Nucleotide cyclase"/>
    <property type="match status" value="1"/>
</dbReference>
<dbReference type="InterPro" id="IPR001054">
    <property type="entry name" value="A/G_cyclase"/>
</dbReference>
<dbReference type="InterPro" id="IPR050697">
    <property type="entry name" value="Adenylyl/Guanylyl_Cyclase_3/4"/>
</dbReference>
<dbReference type="InterPro" id="IPR029787">
    <property type="entry name" value="Nucleotide_cyclase"/>
</dbReference>
<dbReference type="InterPro" id="IPR028082">
    <property type="entry name" value="Peripla_BP_I"/>
</dbReference>
<dbReference type="PANTHER" id="PTHR43081:SF1">
    <property type="entry name" value="ADENYLATE CYCLASE, TERMINAL-DIFFERENTIATION SPECIFIC"/>
    <property type="match status" value="1"/>
</dbReference>
<dbReference type="PANTHER" id="PTHR43081">
    <property type="entry name" value="ADENYLATE CYCLASE, TERMINAL-DIFFERENTIATION SPECIFIC-RELATED"/>
    <property type="match status" value="1"/>
</dbReference>
<dbReference type="Pfam" id="PF00211">
    <property type="entry name" value="Guanylate_cyc"/>
    <property type="match status" value="1"/>
</dbReference>
<dbReference type="Pfam" id="PF25493">
    <property type="entry name" value="Peripla_BP_A-cyclase"/>
    <property type="match status" value="1"/>
</dbReference>
<dbReference type="Pfam" id="PF25495">
    <property type="entry name" value="Peripla_BP_A-cyclase_1"/>
    <property type="match status" value="1"/>
</dbReference>
<dbReference type="SMART" id="SM00044">
    <property type="entry name" value="CYCc"/>
    <property type="match status" value="1"/>
</dbReference>
<dbReference type="SUPFAM" id="SSF55073">
    <property type="entry name" value="Nucleotide cyclase"/>
    <property type="match status" value="1"/>
</dbReference>
<dbReference type="SUPFAM" id="SSF53822">
    <property type="entry name" value="Periplasmic binding protein-like I"/>
    <property type="match status" value="1"/>
</dbReference>
<dbReference type="PROSITE" id="PS50125">
    <property type="entry name" value="GUANYLATE_CYCLASE_2"/>
    <property type="match status" value="1"/>
</dbReference>
<gene>
    <name type="primary">ESAG4</name>
</gene>
<organism>
    <name type="scientific">Trypanosoma brucei brucei</name>
    <dbReference type="NCBI Taxonomy" id="5702"/>
    <lineage>
        <taxon>Eukaryota</taxon>
        <taxon>Discoba</taxon>
        <taxon>Euglenozoa</taxon>
        <taxon>Kinetoplastea</taxon>
        <taxon>Metakinetoplastina</taxon>
        <taxon>Trypanosomatida</taxon>
        <taxon>Trypanosomatidae</taxon>
        <taxon>Trypanosoma</taxon>
    </lineage>
</organism>
<feature type="chain" id="PRO_0000195736" description="Receptor-type adenylate cyclase ESAG 4">
    <location>
        <begin position="1"/>
        <end position="1235"/>
    </location>
</feature>
<feature type="topological domain" description="Cytoplasmic" evidence="3">
    <location>
        <begin position="1"/>
        <end position="32"/>
    </location>
</feature>
<feature type="transmembrane region" description="Helical" evidence="3">
    <location>
        <begin position="33"/>
        <end position="53"/>
    </location>
</feature>
<feature type="topological domain" description="Extracellular" evidence="3">
    <location>
        <begin position="54"/>
        <end position="858"/>
    </location>
</feature>
<feature type="transmembrane region" description="Helical" evidence="3">
    <location>
        <begin position="859"/>
        <end position="879"/>
    </location>
</feature>
<feature type="topological domain" description="Cytoplasmic" evidence="3">
    <location>
        <begin position="880"/>
        <end position="1235"/>
    </location>
</feature>
<feature type="domain" description="Guanylate cyclase" evidence="4">
    <location>
        <begin position="900"/>
        <end position="1054"/>
    </location>
</feature>
<feature type="region of interest" description="Disordered" evidence="5">
    <location>
        <begin position="1"/>
        <end position="20"/>
    </location>
</feature>
<feature type="binding site" evidence="2">
    <location>
        <position position="905"/>
    </location>
    <ligand>
        <name>Mg(2+)</name>
        <dbReference type="ChEBI" id="CHEBI:18420"/>
    </ligand>
</feature>
<feature type="binding site" evidence="2">
    <location>
        <position position="948"/>
    </location>
    <ligand>
        <name>Mg(2+)</name>
        <dbReference type="ChEBI" id="CHEBI:18420"/>
    </ligand>
</feature>
<feature type="glycosylation site" description="N-linked (GlcNAc...) asparagine" evidence="3">
    <location>
        <position position="63"/>
    </location>
</feature>
<feature type="glycosylation site" description="N-linked (GlcNAc...) asparagine" evidence="3">
    <location>
        <position position="90"/>
    </location>
</feature>
<feature type="glycosylation site" description="N-linked (GlcNAc...) asparagine" evidence="3">
    <location>
        <position position="97"/>
    </location>
</feature>
<feature type="glycosylation site" description="N-linked (GlcNAc...) asparagine" evidence="3">
    <location>
        <position position="362"/>
    </location>
</feature>
<feature type="glycosylation site" description="N-linked (GlcNAc...) asparagine" evidence="3">
    <location>
        <position position="531"/>
    </location>
</feature>
<feature type="glycosylation site" description="N-linked (GlcNAc...) asparagine" evidence="3">
    <location>
        <position position="566"/>
    </location>
</feature>
<feature type="glycosylation site" description="N-linked (GlcNAc...) asparagine" evidence="3">
    <location>
        <position position="705"/>
    </location>
</feature>
<feature type="glycosylation site" description="N-linked (GlcNAc...) asparagine" evidence="3">
    <location>
        <position position="830"/>
    </location>
</feature>
<name>CYA4_TRYBB</name>
<keyword id="KW-0067">ATP-binding</keyword>
<keyword id="KW-0115">cAMP biosynthesis</keyword>
<keyword id="KW-0325">Glycoprotein</keyword>
<keyword id="KW-0456">Lyase</keyword>
<keyword id="KW-0460">Magnesium</keyword>
<keyword id="KW-0472">Membrane</keyword>
<keyword id="KW-0479">Metal-binding</keyword>
<keyword id="KW-0547">Nucleotide-binding</keyword>
<keyword id="KW-0675">Receptor</keyword>
<keyword id="KW-0812">Transmembrane</keyword>
<keyword id="KW-1133">Transmembrane helix</keyword>
<evidence type="ECO:0000250" key="1"/>
<evidence type="ECO:0000250" key="2">
    <source>
        <dbReference type="UniProtKB" id="Q99280"/>
    </source>
</evidence>
<evidence type="ECO:0000255" key="3"/>
<evidence type="ECO:0000255" key="4">
    <source>
        <dbReference type="PROSITE-ProRule" id="PRU00099"/>
    </source>
</evidence>
<evidence type="ECO:0000256" key="5">
    <source>
        <dbReference type="SAM" id="MobiDB-lite"/>
    </source>
</evidence>
<evidence type="ECO:0000305" key="6"/>
<comment type="function">
    <text>Could act as a receptor for an unknown ligand.</text>
</comment>
<comment type="catalytic activity">
    <reaction>
        <text>ATP = 3',5'-cyclic AMP + diphosphate</text>
        <dbReference type="Rhea" id="RHEA:15389"/>
        <dbReference type="ChEBI" id="CHEBI:30616"/>
        <dbReference type="ChEBI" id="CHEBI:33019"/>
        <dbReference type="ChEBI" id="CHEBI:58165"/>
        <dbReference type="EC" id="4.6.1.1"/>
    </reaction>
</comment>
<comment type="cofactor">
    <cofactor evidence="1">
        <name>Mg(2+)</name>
        <dbReference type="ChEBI" id="CHEBI:18420"/>
    </cofactor>
    <text evidence="1">Binds 1 Mg(2+) ion per subunit.</text>
</comment>
<comment type="subcellular location">
    <subcellularLocation>
        <location evidence="6">Membrane</location>
        <topology evidence="6">Multi-pass membrane protein</topology>
    </subcellularLocation>
</comment>
<comment type="similarity">
    <text evidence="6">Belongs to the adenylyl cyclase class-3 family.</text>
</comment>